<proteinExistence type="evidence at transcript level"/>
<keyword id="KW-0238">DNA-binding</keyword>
<keyword id="KW-0479">Metal-binding</keyword>
<keyword id="KW-0539">Nucleus</keyword>
<keyword id="KW-1185">Reference proteome</keyword>
<keyword id="KW-0804">Transcription</keyword>
<keyword id="KW-0805">Transcription regulation</keyword>
<keyword id="KW-0862">Zinc</keyword>
<keyword id="KW-0863">Zinc-finger</keyword>
<reference key="1">
    <citation type="journal article" date="2005" name="Mol. Genet. Genomics">
        <title>A fine physical map of the rice chromosome 5.</title>
        <authorList>
            <person name="Cheng C.-H."/>
            <person name="Chung M.C."/>
            <person name="Liu S.-M."/>
            <person name="Chen S.-K."/>
            <person name="Kao F.Y."/>
            <person name="Lin S.-J."/>
            <person name="Hsiao S.-H."/>
            <person name="Tseng I.C."/>
            <person name="Hsing Y.-I.C."/>
            <person name="Wu H.-P."/>
            <person name="Chen C.-S."/>
            <person name="Shaw J.-F."/>
            <person name="Wu J."/>
            <person name="Matsumoto T."/>
            <person name="Sasaki T."/>
            <person name="Chen H.-C."/>
            <person name="Chow T.-Y."/>
        </authorList>
    </citation>
    <scope>NUCLEOTIDE SEQUENCE [LARGE SCALE GENOMIC DNA]</scope>
    <source>
        <strain>cv. Nipponbare</strain>
    </source>
</reference>
<reference key="2">
    <citation type="journal article" date="2005" name="Nature">
        <title>The map-based sequence of the rice genome.</title>
        <authorList>
            <consortium name="International rice genome sequencing project (IRGSP)"/>
        </authorList>
    </citation>
    <scope>NUCLEOTIDE SEQUENCE [LARGE SCALE GENOMIC DNA]</scope>
    <source>
        <strain>cv. Nipponbare</strain>
    </source>
</reference>
<reference key="3">
    <citation type="journal article" date="2008" name="Nucleic Acids Res.">
        <title>The rice annotation project database (RAP-DB): 2008 update.</title>
        <authorList>
            <consortium name="The rice annotation project (RAP)"/>
        </authorList>
    </citation>
    <scope>GENOME REANNOTATION</scope>
    <source>
        <strain>cv. Nipponbare</strain>
    </source>
</reference>
<reference key="4">
    <citation type="journal article" date="2013" name="Rice">
        <title>Improvement of the Oryza sativa Nipponbare reference genome using next generation sequence and optical map data.</title>
        <authorList>
            <person name="Kawahara Y."/>
            <person name="de la Bastide M."/>
            <person name="Hamilton J.P."/>
            <person name="Kanamori H."/>
            <person name="McCombie W.R."/>
            <person name="Ouyang S."/>
            <person name="Schwartz D.C."/>
            <person name="Tanaka T."/>
            <person name="Wu J."/>
            <person name="Zhou S."/>
            <person name="Childs K.L."/>
            <person name="Davidson R.M."/>
            <person name="Lin H."/>
            <person name="Quesada-Ocampo L."/>
            <person name="Vaillancourt B."/>
            <person name="Sakai H."/>
            <person name="Lee S.S."/>
            <person name="Kim J."/>
            <person name="Numa H."/>
            <person name="Itoh T."/>
            <person name="Buell C.R."/>
            <person name="Matsumoto T."/>
        </authorList>
    </citation>
    <scope>GENOME REANNOTATION</scope>
    <source>
        <strain>cv. Nipponbare</strain>
    </source>
</reference>
<reference key="5">
    <citation type="journal article" date="2003" name="Science">
        <title>Collection, mapping, and annotation of over 28,000 cDNA clones from japonica rice.</title>
        <authorList>
            <consortium name="The rice full-length cDNA consortium"/>
        </authorList>
    </citation>
    <scope>NUCLEOTIDE SEQUENCE [LARGE SCALE MRNA]</scope>
    <source>
        <strain>cv. Nipponbare</strain>
    </source>
</reference>
<reference key="6">
    <citation type="journal article" date="2012" name="BMC Plant Biol.">
        <title>The SLEEPER genes: a transposase-derived angiosperm-specific gene family.</title>
        <authorList>
            <person name="Knip M."/>
            <person name="de Pater S."/>
            <person name="Hooykaas P.J."/>
        </authorList>
    </citation>
    <scope>FUNCTION</scope>
    <scope>SUBCELLULAR LOCATION</scope>
</reference>
<comment type="function">
    <text evidence="3">Transposase-like protein that is essential for plant growth and development. May regulate global gene expression by recruiting other cellular factors.</text>
</comment>
<comment type="subunit">
    <text evidence="1">Homodimer.</text>
</comment>
<comment type="subcellular location">
    <subcellularLocation>
        <location evidence="3">Nucleus</location>
    </subcellularLocation>
</comment>
<feature type="chain" id="PRO_0000429564" description="Zinc finger BED domain-containing protein RICESLEEPER 3">
    <location>
        <begin position="1"/>
        <end position="752"/>
    </location>
</feature>
<feature type="zinc finger region" description="BED-type" evidence="2">
    <location>
        <begin position="106"/>
        <end position="166"/>
    </location>
</feature>
<feature type="region of interest" description="HATC (Hobo-Ac-Tam3) domain">
    <location>
        <begin position="647"/>
        <end position="733"/>
    </location>
</feature>
<feature type="binding site" evidence="2">
    <location>
        <position position="129"/>
    </location>
    <ligand>
        <name>Zn(2+)</name>
        <dbReference type="ChEBI" id="CHEBI:29105"/>
    </ligand>
</feature>
<feature type="binding site" evidence="2">
    <location>
        <position position="132"/>
    </location>
    <ligand>
        <name>Zn(2+)</name>
        <dbReference type="ChEBI" id="CHEBI:29105"/>
    </ligand>
</feature>
<feature type="binding site" evidence="2">
    <location>
        <position position="153"/>
    </location>
    <ligand>
        <name>Zn(2+)</name>
        <dbReference type="ChEBI" id="CHEBI:29105"/>
    </ligand>
</feature>
<feature type="binding site" evidence="2">
    <location>
        <position position="159"/>
    </location>
    <ligand>
        <name>Zn(2+)</name>
        <dbReference type="ChEBI" id="CHEBI:29105"/>
    </ligand>
</feature>
<sequence length="752" mass="84675">MCEPSGSDDAMVHASEMVDGDEMIHGNEMVVHDSVMIDGNEMVQENVMVHGSGEMVQGSEMVHNNEIIQVNDMIQVNEMVNGDKMAHGHELVGVELTTPTASRRRRKKSVVWEHFTIEEMPGGVSRASCNLCKQTFAYSCGSKISGTSHLKRHITLASCPMLKNEDMKLSLPLATVTNNDGEGCAERVAKRHYRSTGYANAMFDQDRTCSNLAKMIILHDYPLHIVEQRGFTAFIGSLQPRFRVIDVDTIEGQVHSVYQKERENLMHVFSTVPGRISLTVRLWATSQTLGYISLAAQFIDTEWRVHRRMVNFMMVSSPHSENSLSEAISTSLSDWNMKDKLFTITLDNDPSSHDIYSANMINYLSNKKDNIMIKGQLFVVRCYAHILNTVAQDVIASVHSVIYHIRESIKFIKASSVHEDKFAEIALQLEIPSAKTLCLDVTTQWNTTYLMLLAALDYQQVFASLETCDGDYNEAPSTEDWKKVEAACSYLSLLYDSAHNIMAAPNPTSNIFFHEAWKLQSELSNAIAHEDPIFRSTAKIMHERFDKYWKDCNLVLAIAVVMDPRFKMKLVEFSYSKIHSVEAAKYVKVVDDAIHELYSEYATQGEANRDAHVTDNSAAVTPPNGDELLDFDIYLSEIATSQPSISELEQYLEEALMPRIQDFEILEWWKLNTIKFPTLSKMARDVLAIPMSMVSSGSSIFSATATGSQMLDDYRSSLRPETVEALFCAKDWLQYPPATTEAPSTALVKMEN</sequence>
<evidence type="ECO:0000250" key="1"/>
<evidence type="ECO:0000255" key="2">
    <source>
        <dbReference type="PROSITE-ProRule" id="PRU00027"/>
    </source>
</evidence>
<evidence type="ECO:0000269" key="3">
    <source>
    </source>
</evidence>
<name>RSLE3_ORYSJ</name>
<dbReference type="EMBL" id="AC134929">
    <property type="protein sequence ID" value="AAS16892.1"/>
    <property type="molecule type" value="Genomic_DNA"/>
</dbReference>
<dbReference type="EMBL" id="AP008211">
    <property type="protein sequence ID" value="BAF18359.1"/>
    <property type="molecule type" value="Genomic_DNA"/>
</dbReference>
<dbReference type="EMBL" id="AP014961">
    <property type="protein sequence ID" value="BAS95547.1"/>
    <property type="molecule type" value="Genomic_DNA"/>
</dbReference>
<dbReference type="EMBL" id="AK102230">
    <property type="protein sequence ID" value="BAG95453.1"/>
    <property type="molecule type" value="mRNA"/>
</dbReference>
<dbReference type="RefSeq" id="XP_015637732.1">
    <property type="nucleotide sequence ID" value="XM_015782246.1"/>
</dbReference>
<dbReference type="FunCoup" id="Q75HY5">
    <property type="interactions" value="1490"/>
</dbReference>
<dbReference type="STRING" id="39947.Q75HY5"/>
<dbReference type="PaxDb" id="39947-Q75HY5"/>
<dbReference type="EnsemblPlants" id="Os05t0583200-01">
    <property type="protein sequence ID" value="Os05t0583200-01"/>
    <property type="gene ID" value="Os05g0583200"/>
</dbReference>
<dbReference type="Gramene" id="Os05t0583200-01">
    <property type="protein sequence ID" value="Os05t0583200-01"/>
    <property type="gene ID" value="Os05g0583200"/>
</dbReference>
<dbReference type="KEGG" id="dosa:Os05g0583200"/>
<dbReference type="KEGG" id="osa:4339741"/>
<dbReference type="eggNOG" id="KOG1121">
    <property type="taxonomic scope" value="Eukaryota"/>
</dbReference>
<dbReference type="HOGENOM" id="CLU_009123_1_2_1"/>
<dbReference type="InParanoid" id="Q75HY5"/>
<dbReference type="OMA" id="YSANMIN"/>
<dbReference type="OrthoDB" id="2610923at2759"/>
<dbReference type="Proteomes" id="UP000000763">
    <property type="component" value="Chromosome 5"/>
</dbReference>
<dbReference type="Proteomes" id="UP000059680">
    <property type="component" value="Chromosome 5"/>
</dbReference>
<dbReference type="GO" id="GO:0005634">
    <property type="term" value="C:nucleus"/>
    <property type="evidence" value="ECO:0000314"/>
    <property type="project" value="UniProtKB"/>
</dbReference>
<dbReference type="GO" id="GO:0003677">
    <property type="term" value="F:DNA binding"/>
    <property type="evidence" value="ECO:0007669"/>
    <property type="project" value="UniProtKB-KW"/>
</dbReference>
<dbReference type="GO" id="GO:0046983">
    <property type="term" value="F:protein dimerization activity"/>
    <property type="evidence" value="ECO:0007669"/>
    <property type="project" value="InterPro"/>
</dbReference>
<dbReference type="GO" id="GO:0008270">
    <property type="term" value="F:zinc ion binding"/>
    <property type="evidence" value="ECO:0007669"/>
    <property type="project" value="UniProtKB-KW"/>
</dbReference>
<dbReference type="GO" id="GO:0009791">
    <property type="term" value="P:post-embryonic development"/>
    <property type="evidence" value="ECO:0000304"/>
    <property type="project" value="UniProtKB"/>
</dbReference>
<dbReference type="InterPro" id="IPR025525">
    <property type="entry name" value="hAT-like_transposase_RNase-H"/>
</dbReference>
<dbReference type="InterPro" id="IPR008906">
    <property type="entry name" value="HATC_C_dom"/>
</dbReference>
<dbReference type="InterPro" id="IPR012337">
    <property type="entry name" value="RNaseH-like_sf"/>
</dbReference>
<dbReference type="InterPro" id="IPR003656">
    <property type="entry name" value="Znf_BED"/>
</dbReference>
<dbReference type="InterPro" id="IPR052035">
    <property type="entry name" value="ZnF_BED_domain_contain"/>
</dbReference>
<dbReference type="InterPro" id="IPR036236">
    <property type="entry name" value="Znf_C2H2_sf"/>
</dbReference>
<dbReference type="PANTHER" id="PTHR46481:SF10">
    <property type="entry name" value="ZINC FINGER BED DOMAIN-CONTAINING PROTEIN 39"/>
    <property type="match status" value="1"/>
</dbReference>
<dbReference type="PANTHER" id="PTHR46481">
    <property type="entry name" value="ZINC FINGER BED DOMAIN-CONTAINING PROTEIN 4"/>
    <property type="match status" value="1"/>
</dbReference>
<dbReference type="Pfam" id="PF05699">
    <property type="entry name" value="Dimer_Tnp_hAT"/>
    <property type="match status" value="1"/>
</dbReference>
<dbReference type="Pfam" id="PF14372">
    <property type="entry name" value="hAT-like_RNase-H"/>
    <property type="match status" value="1"/>
</dbReference>
<dbReference type="Pfam" id="PF02892">
    <property type="entry name" value="zf-BED"/>
    <property type="match status" value="1"/>
</dbReference>
<dbReference type="SMART" id="SM00614">
    <property type="entry name" value="ZnF_BED"/>
    <property type="match status" value="1"/>
</dbReference>
<dbReference type="SUPFAM" id="SSF57667">
    <property type="entry name" value="beta-beta-alpha zinc fingers"/>
    <property type="match status" value="1"/>
</dbReference>
<dbReference type="SUPFAM" id="SSF53098">
    <property type="entry name" value="Ribonuclease H-like"/>
    <property type="match status" value="1"/>
</dbReference>
<dbReference type="PROSITE" id="PS50808">
    <property type="entry name" value="ZF_BED"/>
    <property type="match status" value="1"/>
</dbReference>
<gene>
    <name type="ordered locus">Os05g0583200</name>
    <name type="ordered locus">LOC_Os05g50640</name>
    <name type="ORF">OSJNBb0035N21.10</name>
</gene>
<organism>
    <name type="scientific">Oryza sativa subsp. japonica</name>
    <name type="common">Rice</name>
    <dbReference type="NCBI Taxonomy" id="39947"/>
    <lineage>
        <taxon>Eukaryota</taxon>
        <taxon>Viridiplantae</taxon>
        <taxon>Streptophyta</taxon>
        <taxon>Embryophyta</taxon>
        <taxon>Tracheophyta</taxon>
        <taxon>Spermatophyta</taxon>
        <taxon>Magnoliopsida</taxon>
        <taxon>Liliopsida</taxon>
        <taxon>Poales</taxon>
        <taxon>Poaceae</taxon>
        <taxon>BOP clade</taxon>
        <taxon>Oryzoideae</taxon>
        <taxon>Oryzeae</taxon>
        <taxon>Oryzinae</taxon>
        <taxon>Oryza</taxon>
        <taxon>Oryza sativa</taxon>
    </lineage>
</organism>
<accession>Q75HY5</accession>
<accession>A0A0P0WRF7</accession>
<protein>
    <recommendedName>
        <fullName>Zinc finger BED domain-containing protein RICESLEEPER 3</fullName>
    </recommendedName>
    <alternativeName>
        <fullName>Transposase-like protein RICESLEEPER 3</fullName>
    </alternativeName>
</protein>